<evidence type="ECO:0000255" key="1">
    <source>
        <dbReference type="HAMAP-Rule" id="MF_00632"/>
    </source>
</evidence>
<comment type="function">
    <text evidence="1">Nucleotide-binding protein.</text>
</comment>
<comment type="similarity">
    <text evidence="1">Belongs to the YajQ family.</text>
</comment>
<protein>
    <recommendedName>
        <fullName evidence="1">Nucleotide-binding protein LPC_0632</fullName>
    </recommendedName>
</protein>
<accession>A5IB64</accession>
<keyword id="KW-0547">Nucleotide-binding</keyword>
<name>Y632_LEGPC</name>
<sequence length="161" mass="18517">MPSFDIVSKMNEVDLRNAVDNAVREVSTRFDFRGVEATIELKDLTVTLRSESDFQVRQLEDLFRNHCSKRNLSTSGVDIEDEPVHSGKFYTLTMTFKQGIDQPTAKEIVKYIKETKAKVQTSIQGDKVRVTGKKRDDLQETIALLKKSNIELPLQYENFRD</sequence>
<gene>
    <name type="ordered locus">LPC_0632</name>
</gene>
<proteinExistence type="inferred from homology"/>
<reference key="1">
    <citation type="submission" date="2006-11" db="EMBL/GenBank/DDBJ databases">
        <title>Identification and characterization of a new conjugation/ type IVA secretion system (trb/tra) of L. pneumophila Corby localized on a mobile genomic island.</title>
        <authorList>
            <person name="Gloeckner G."/>
            <person name="Albert-Weissenberger C."/>
            <person name="Weinmann E."/>
            <person name="Jacobi S."/>
            <person name="Schunder E."/>
            <person name="Steinert M."/>
            <person name="Buchrieser C."/>
            <person name="Hacker J."/>
            <person name="Heuner K."/>
        </authorList>
    </citation>
    <scope>NUCLEOTIDE SEQUENCE [LARGE SCALE GENOMIC DNA]</scope>
    <source>
        <strain>Corby</strain>
    </source>
</reference>
<feature type="chain" id="PRO_1000051734" description="Nucleotide-binding protein LPC_0632">
    <location>
        <begin position="1"/>
        <end position="161"/>
    </location>
</feature>
<dbReference type="EMBL" id="CP000675">
    <property type="protein sequence ID" value="ABQ54614.1"/>
    <property type="molecule type" value="Genomic_DNA"/>
</dbReference>
<dbReference type="RefSeq" id="WP_011213523.1">
    <property type="nucleotide sequence ID" value="NZ_JAPMSS010000002.1"/>
</dbReference>
<dbReference type="SMR" id="A5IB64"/>
<dbReference type="KEGG" id="lpc:LPC_0632"/>
<dbReference type="HOGENOM" id="CLU_099839_1_0_6"/>
<dbReference type="GO" id="GO:0005829">
    <property type="term" value="C:cytosol"/>
    <property type="evidence" value="ECO:0007669"/>
    <property type="project" value="TreeGrafter"/>
</dbReference>
<dbReference type="GO" id="GO:0000166">
    <property type="term" value="F:nucleotide binding"/>
    <property type="evidence" value="ECO:0007669"/>
    <property type="project" value="TreeGrafter"/>
</dbReference>
<dbReference type="CDD" id="cd11740">
    <property type="entry name" value="YajQ_like"/>
    <property type="match status" value="1"/>
</dbReference>
<dbReference type="Gene3D" id="3.30.70.860">
    <property type="match status" value="1"/>
</dbReference>
<dbReference type="Gene3D" id="3.30.70.990">
    <property type="entry name" value="YajQ-like, domain 2"/>
    <property type="match status" value="1"/>
</dbReference>
<dbReference type="HAMAP" id="MF_00632">
    <property type="entry name" value="YajQ"/>
    <property type="match status" value="1"/>
</dbReference>
<dbReference type="InterPro" id="IPR007551">
    <property type="entry name" value="DUF520"/>
</dbReference>
<dbReference type="InterPro" id="IPR035571">
    <property type="entry name" value="UPF0234-like_C"/>
</dbReference>
<dbReference type="InterPro" id="IPR035570">
    <property type="entry name" value="UPF0234_N"/>
</dbReference>
<dbReference type="InterPro" id="IPR036183">
    <property type="entry name" value="YajQ-like_sf"/>
</dbReference>
<dbReference type="NCBIfam" id="NF003819">
    <property type="entry name" value="PRK05412.1"/>
    <property type="match status" value="1"/>
</dbReference>
<dbReference type="PANTHER" id="PTHR30476">
    <property type="entry name" value="UPF0234 PROTEIN YAJQ"/>
    <property type="match status" value="1"/>
</dbReference>
<dbReference type="PANTHER" id="PTHR30476:SF0">
    <property type="entry name" value="UPF0234 PROTEIN YAJQ"/>
    <property type="match status" value="1"/>
</dbReference>
<dbReference type="Pfam" id="PF04461">
    <property type="entry name" value="DUF520"/>
    <property type="match status" value="1"/>
</dbReference>
<dbReference type="SUPFAM" id="SSF89963">
    <property type="entry name" value="YajQ-like"/>
    <property type="match status" value="2"/>
</dbReference>
<organism>
    <name type="scientific">Legionella pneumophila (strain Corby)</name>
    <dbReference type="NCBI Taxonomy" id="400673"/>
    <lineage>
        <taxon>Bacteria</taxon>
        <taxon>Pseudomonadati</taxon>
        <taxon>Pseudomonadota</taxon>
        <taxon>Gammaproteobacteria</taxon>
        <taxon>Legionellales</taxon>
        <taxon>Legionellaceae</taxon>
        <taxon>Legionella</taxon>
    </lineage>
</organism>